<reference key="1">
    <citation type="journal article" date="2007" name="PLoS ONE">
        <title>A glimpse of streptococcal toxic shock syndrome from comparative genomics of S. suis 2 Chinese isolates.</title>
        <authorList>
            <person name="Chen C."/>
            <person name="Tang J."/>
            <person name="Dong W."/>
            <person name="Wang C."/>
            <person name="Feng Y."/>
            <person name="Wang J."/>
            <person name="Zheng F."/>
            <person name="Pan X."/>
            <person name="Liu D."/>
            <person name="Li M."/>
            <person name="Song Y."/>
            <person name="Zhu X."/>
            <person name="Sun H."/>
            <person name="Feng T."/>
            <person name="Guo Z."/>
            <person name="Ju A."/>
            <person name="Ge J."/>
            <person name="Dong Y."/>
            <person name="Sun W."/>
            <person name="Jiang Y."/>
            <person name="Wang J."/>
            <person name="Yan J."/>
            <person name="Yang H."/>
            <person name="Wang X."/>
            <person name="Gao G.F."/>
            <person name="Yang R."/>
            <person name="Wang J."/>
            <person name="Yu J."/>
        </authorList>
    </citation>
    <scope>NUCLEOTIDE SEQUENCE [LARGE SCALE GENOMIC DNA]</scope>
    <source>
        <strain>05ZYH33</strain>
    </source>
</reference>
<sequence>MSKDIRVLLYYKYVPIENAKEYAAEHLAFCKSIGLKGRILIADEGINGTVSGDYETTQKYMDYVHANPLFSDLWFKIDEENEQAFKKMFVRYKKEIVHLGLEDNDFDNDIDPLVTTGAYLSPKEFKEALLDEDTVVLDTRNDYEYDLGHFRGAIRPDIRNFRELPQWVRDNKEKFMDKRVVVYCTGGVRCEKFSGWMVREGYKDVGQLHGGIATYGKDPEVRGELWDGKMYVFDERIAVDVNHVNPVVVGKDWFDGTPCERYVNCGNPFCNRRILTSEENEHKYVRGCSAECRAHERNRYISENGLTRQEWAERLEAIGETLTPANA</sequence>
<gene>
    <name evidence="1" type="primary">trhO</name>
    <name type="ordered locus">SSU05_0406</name>
</gene>
<proteinExistence type="inferred from homology"/>
<dbReference type="EC" id="1.14.-.-" evidence="1"/>
<dbReference type="EMBL" id="CP000407">
    <property type="protein sequence ID" value="ABP89373.1"/>
    <property type="molecule type" value="Genomic_DNA"/>
</dbReference>
<dbReference type="SMR" id="A4VTD4"/>
<dbReference type="STRING" id="391295.SSU05_0406"/>
<dbReference type="KEGG" id="ssu:SSU05_0406"/>
<dbReference type="eggNOG" id="COG1054">
    <property type="taxonomic scope" value="Bacteria"/>
</dbReference>
<dbReference type="HOGENOM" id="CLU_038878_1_0_9"/>
<dbReference type="BioCyc" id="SSUI391295:GHI8-442-MONOMER"/>
<dbReference type="GO" id="GO:0016705">
    <property type="term" value="F:oxidoreductase activity, acting on paired donors, with incorporation or reduction of molecular oxygen"/>
    <property type="evidence" value="ECO:0007669"/>
    <property type="project" value="UniProtKB-UniRule"/>
</dbReference>
<dbReference type="GO" id="GO:0006400">
    <property type="term" value="P:tRNA modification"/>
    <property type="evidence" value="ECO:0007669"/>
    <property type="project" value="UniProtKB-UniRule"/>
</dbReference>
<dbReference type="CDD" id="cd01518">
    <property type="entry name" value="RHOD_YceA"/>
    <property type="match status" value="1"/>
</dbReference>
<dbReference type="Gene3D" id="3.30.70.100">
    <property type="match status" value="1"/>
</dbReference>
<dbReference type="Gene3D" id="3.40.250.10">
    <property type="entry name" value="Rhodanese-like domain"/>
    <property type="match status" value="1"/>
</dbReference>
<dbReference type="HAMAP" id="MF_00469">
    <property type="entry name" value="TrhO"/>
    <property type="match status" value="1"/>
</dbReference>
<dbReference type="InterPro" id="IPR001763">
    <property type="entry name" value="Rhodanese-like_dom"/>
</dbReference>
<dbReference type="InterPro" id="IPR036873">
    <property type="entry name" value="Rhodanese-like_dom_sf"/>
</dbReference>
<dbReference type="InterPro" id="IPR022111">
    <property type="entry name" value="Rhodanese_C"/>
</dbReference>
<dbReference type="InterPro" id="IPR020936">
    <property type="entry name" value="TrhO"/>
</dbReference>
<dbReference type="InterPro" id="IPR040503">
    <property type="entry name" value="TRHO_N"/>
</dbReference>
<dbReference type="NCBIfam" id="NF001135">
    <property type="entry name" value="PRK00142.1-3"/>
    <property type="match status" value="1"/>
</dbReference>
<dbReference type="NCBIfam" id="NF001137">
    <property type="entry name" value="PRK00142.1-5"/>
    <property type="match status" value="1"/>
</dbReference>
<dbReference type="PANTHER" id="PTHR43268:SF3">
    <property type="entry name" value="RHODANESE-LIKE DOMAIN-CONTAINING PROTEIN 7-RELATED"/>
    <property type="match status" value="1"/>
</dbReference>
<dbReference type="PANTHER" id="PTHR43268">
    <property type="entry name" value="THIOSULFATE SULFURTRANSFERASE/RHODANESE-LIKE DOMAIN-CONTAINING PROTEIN 2"/>
    <property type="match status" value="1"/>
</dbReference>
<dbReference type="Pfam" id="PF00581">
    <property type="entry name" value="Rhodanese"/>
    <property type="match status" value="1"/>
</dbReference>
<dbReference type="Pfam" id="PF12368">
    <property type="entry name" value="Rhodanese_C"/>
    <property type="match status" value="1"/>
</dbReference>
<dbReference type="Pfam" id="PF17773">
    <property type="entry name" value="UPF0176_N"/>
    <property type="match status" value="1"/>
</dbReference>
<dbReference type="SMART" id="SM00450">
    <property type="entry name" value="RHOD"/>
    <property type="match status" value="1"/>
</dbReference>
<dbReference type="SUPFAM" id="SSF52821">
    <property type="entry name" value="Rhodanese/Cell cycle control phosphatase"/>
    <property type="match status" value="1"/>
</dbReference>
<dbReference type="PROSITE" id="PS50206">
    <property type="entry name" value="RHODANESE_3"/>
    <property type="match status" value="1"/>
</dbReference>
<name>TRHO_STRSY</name>
<feature type="chain" id="PRO_1000013791" description="tRNA uridine(34) hydroxylase">
    <location>
        <begin position="1"/>
        <end position="327"/>
    </location>
</feature>
<feature type="domain" description="Rhodanese" evidence="1">
    <location>
        <begin position="130"/>
        <end position="224"/>
    </location>
</feature>
<feature type="active site" description="Cysteine persulfide intermediate" evidence="1">
    <location>
        <position position="184"/>
    </location>
</feature>
<organism>
    <name type="scientific">Streptococcus suis (strain 05ZYH33)</name>
    <dbReference type="NCBI Taxonomy" id="391295"/>
    <lineage>
        <taxon>Bacteria</taxon>
        <taxon>Bacillati</taxon>
        <taxon>Bacillota</taxon>
        <taxon>Bacilli</taxon>
        <taxon>Lactobacillales</taxon>
        <taxon>Streptococcaceae</taxon>
        <taxon>Streptococcus</taxon>
    </lineage>
</organism>
<accession>A4VTD4</accession>
<comment type="function">
    <text evidence="1">Catalyzes oxygen-dependent 5-hydroxyuridine (ho5U) modification at position 34 in tRNAs.</text>
</comment>
<comment type="catalytic activity">
    <reaction evidence="1">
        <text>uridine(34) in tRNA + AH2 + O2 = 5-hydroxyuridine(34) in tRNA + A + H2O</text>
        <dbReference type="Rhea" id="RHEA:64224"/>
        <dbReference type="Rhea" id="RHEA-COMP:11727"/>
        <dbReference type="Rhea" id="RHEA-COMP:13381"/>
        <dbReference type="ChEBI" id="CHEBI:13193"/>
        <dbReference type="ChEBI" id="CHEBI:15377"/>
        <dbReference type="ChEBI" id="CHEBI:15379"/>
        <dbReference type="ChEBI" id="CHEBI:17499"/>
        <dbReference type="ChEBI" id="CHEBI:65315"/>
        <dbReference type="ChEBI" id="CHEBI:136877"/>
    </reaction>
</comment>
<comment type="similarity">
    <text evidence="1">Belongs to the TrhO family.</text>
</comment>
<evidence type="ECO:0000255" key="1">
    <source>
        <dbReference type="HAMAP-Rule" id="MF_00469"/>
    </source>
</evidence>
<keyword id="KW-0560">Oxidoreductase</keyword>
<keyword id="KW-0819">tRNA processing</keyword>
<protein>
    <recommendedName>
        <fullName evidence="1">tRNA uridine(34) hydroxylase</fullName>
        <ecNumber evidence="1">1.14.-.-</ecNumber>
    </recommendedName>
    <alternativeName>
        <fullName evidence="1">tRNA hydroxylation protein O</fullName>
    </alternativeName>
</protein>